<name>GATB_LACH4</name>
<proteinExistence type="inferred from homology"/>
<comment type="function">
    <text evidence="1">Allows the formation of correctly charged Asn-tRNA(Asn) or Gln-tRNA(Gln) through the transamidation of misacylated Asp-tRNA(Asn) or Glu-tRNA(Gln) in organisms which lack either or both of asparaginyl-tRNA or glutaminyl-tRNA synthetases. The reaction takes place in the presence of glutamine and ATP through an activated phospho-Asp-tRNA(Asn) or phospho-Glu-tRNA(Gln).</text>
</comment>
<comment type="catalytic activity">
    <reaction evidence="1">
        <text>L-glutamyl-tRNA(Gln) + L-glutamine + ATP + H2O = L-glutaminyl-tRNA(Gln) + L-glutamate + ADP + phosphate + H(+)</text>
        <dbReference type="Rhea" id="RHEA:17521"/>
        <dbReference type="Rhea" id="RHEA-COMP:9681"/>
        <dbReference type="Rhea" id="RHEA-COMP:9684"/>
        <dbReference type="ChEBI" id="CHEBI:15377"/>
        <dbReference type="ChEBI" id="CHEBI:15378"/>
        <dbReference type="ChEBI" id="CHEBI:29985"/>
        <dbReference type="ChEBI" id="CHEBI:30616"/>
        <dbReference type="ChEBI" id="CHEBI:43474"/>
        <dbReference type="ChEBI" id="CHEBI:58359"/>
        <dbReference type="ChEBI" id="CHEBI:78520"/>
        <dbReference type="ChEBI" id="CHEBI:78521"/>
        <dbReference type="ChEBI" id="CHEBI:456216"/>
    </reaction>
</comment>
<comment type="catalytic activity">
    <reaction evidence="1">
        <text>L-aspartyl-tRNA(Asn) + L-glutamine + ATP + H2O = L-asparaginyl-tRNA(Asn) + L-glutamate + ADP + phosphate + 2 H(+)</text>
        <dbReference type="Rhea" id="RHEA:14513"/>
        <dbReference type="Rhea" id="RHEA-COMP:9674"/>
        <dbReference type="Rhea" id="RHEA-COMP:9677"/>
        <dbReference type="ChEBI" id="CHEBI:15377"/>
        <dbReference type="ChEBI" id="CHEBI:15378"/>
        <dbReference type="ChEBI" id="CHEBI:29985"/>
        <dbReference type="ChEBI" id="CHEBI:30616"/>
        <dbReference type="ChEBI" id="CHEBI:43474"/>
        <dbReference type="ChEBI" id="CHEBI:58359"/>
        <dbReference type="ChEBI" id="CHEBI:78515"/>
        <dbReference type="ChEBI" id="CHEBI:78516"/>
        <dbReference type="ChEBI" id="CHEBI:456216"/>
    </reaction>
</comment>
<comment type="subunit">
    <text evidence="1">Heterotrimer of A, B and C subunits.</text>
</comment>
<comment type="similarity">
    <text evidence="1">Belongs to the GatB/GatE family. GatB subfamily.</text>
</comment>
<keyword id="KW-0067">ATP-binding</keyword>
<keyword id="KW-0436">Ligase</keyword>
<keyword id="KW-0547">Nucleotide-binding</keyword>
<keyword id="KW-0648">Protein biosynthesis</keyword>
<sequence length="476" mass="53834">MNFKSTIGLEVHFELKTKSKIFSPSPVTYGAEQNTETNVIDWAMPGTLPMVNKNVYRLGIMVAIATHAHILPTTHFDRKNYFYPDNPKAYQITQFFQPLARDGYIEVEVRGKKKRIGIHEMHIEEDAGKNTHGTNGFSYVDLNRQGVPLLEVVSEPDMEDPEEAYAYLEKLRKIVQFTGASDVKMEEGSMRVDTNISIRPVGQKELGTKVEMKNLNSFDHVRRSLAYEEKRQEQVLLAGGHIQLSTRRFDEATGKTVLERVKEGASDYRYFPEPDIAPDHISQEWIDQIAKELPKSPFDRYDDYVNKFGLKPYDANVLLQTKESSDFFDAAVAAGADPTLAANWMNTQVNGYLNDHRVSLNDIKLTPEHLAEMIKLIKDGTISSKIAKKVFAETIANGTDPKKYVEDNGMVQLSDTSVLAPMVKKVVDDNPQSVEDFKNGKDRAIGFLVGQIMKQTRGKANPKMVNKLLNQELQNR</sequence>
<reference key="1">
    <citation type="journal article" date="2008" name="J. Bacteriol.">
        <title>Genome sequence of Lactobacillus helveticus: an organism distinguished by selective gene loss and IS element expansion.</title>
        <authorList>
            <person name="Callanan M."/>
            <person name="Kaleta P."/>
            <person name="O'Callaghan J."/>
            <person name="O'Sullivan O."/>
            <person name="Jordan K."/>
            <person name="McAuliffe O."/>
            <person name="Sangrador-Vegas A."/>
            <person name="Slattery L."/>
            <person name="Fitzgerald G.F."/>
            <person name="Beresford T."/>
            <person name="Ross R.P."/>
        </authorList>
    </citation>
    <scope>NUCLEOTIDE SEQUENCE [LARGE SCALE GENOMIC DNA]</scope>
    <source>
        <strain>DPC 4571</strain>
    </source>
</reference>
<protein>
    <recommendedName>
        <fullName evidence="1">Aspartyl/glutamyl-tRNA(Asn/Gln) amidotransferase subunit B</fullName>
        <shortName evidence="1">Asp/Glu-ADT subunit B</shortName>
        <ecNumber evidence="1">6.3.5.-</ecNumber>
    </recommendedName>
</protein>
<gene>
    <name evidence="1" type="primary">gatB</name>
    <name type="ordered locus">lhv_0555</name>
</gene>
<feature type="chain" id="PRO_1000071374" description="Aspartyl/glutamyl-tRNA(Asn/Gln) amidotransferase subunit B">
    <location>
        <begin position="1"/>
        <end position="476"/>
    </location>
</feature>
<evidence type="ECO:0000255" key="1">
    <source>
        <dbReference type="HAMAP-Rule" id="MF_00121"/>
    </source>
</evidence>
<dbReference type="EC" id="6.3.5.-" evidence="1"/>
<dbReference type="EMBL" id="CP000517">
    <property type="protein sequence ID" value="ABX26735.1"/>
    <property type="molecule type" value="Genomic_DNA"/>
</dbReference>
<dbReference type="RefSeq" id="WP_012211519.1">
    <property type="nucleotide sequence ID" value="NC_010080.1"/>
</dbReference>
<dbReference type="SMR" id="A8YTZ7"/>
<dbReference type="KEGG" id="lhe:lhv_0555"/>
<dbReference type="eggNOG" id="COG0064">
    <property type="taxonomic scope" value="Bacteria"/>
</dbReference>
<dbReference type="HOGENOM" id="CLU_019240_0_0_9"/>
<dbReference type="Proteomes" id="UP000000790">
    <property type="component" value="Chromosome"/>
</dbReference>
<dbReference type="GO" id="GO:0050566">
    <property type="term" value="F:asparaginyl-tRNA synthase (glutamine-hydrolyzing) activity"/>
    <property type="evidence" value="ECO:0007669"/>
    <property type="project" value="RHEA"/>
</dbReference>
<dbReference type="GO" id="GO:0005524">
    <property type="term" value="F:ATP binding"/>
    <property type="evidence" value="ECO:0007669"/>
    <property type="project" value="UniProtKB-KW"/>
</dbReference>
<dbReference type="GO" id="GO:0050567">
    <property type="term" value="F:glutaminyl-tRNA synthase (glutamine-hydrolyzing) activity"/>
    <property type="evidence" value="ECO:0007669"/>
    <property type="project" value="UniProtKB-UniRule"/>
</dbReference>
<dbReference type="GO" id="GO:0070681">
    <property type="term" value="P:glutaminyl-tRNAGln biosynthesis via transamidation"/>
    <property type="evidence" value="ECO:0007669"/>
    <property type="project" value="TreeGrafter"/>
</dbReference>
<dbReference type="GO" id="GO:0006412">
    <property type="term" value="P:translation"/>
    <property type="evidence" value="ECO:0007669"/>
    <property type="project" value="UniProtKB-UniRule"/>
</dbReference>
<dbReference type="FunFam" id="1.10.10.410:FF:000001">
    <property type="entry name" value="Aspartyl/glutamyl-tRNA(Asn/Gln) amidotransferase subunit B"/>
    <property type="match status" value="1"/>
</dbReference>
<dbReference type="Gene3D" id="1.10.10.410">
    <property type="match status" value="1"/>
</dbReference>
<dbReference type="Gene3D" id="1.10.150.380">
    <property type="entry name" value="GatB domain, N-terminal subdomain"/>
    <property type="match status" value="1"/>
</dbReference>
<dbReference type="HAMAP" id="MF_00121">
    <property type="entry name" value="GatB"/>
    <property type="match status" value="1"/>
</dbReference>
<dbReference type="InterPro" id="IPR017959">
    <property type="entry name" value="Asn/Gln-tRNA_amidoTrfase_suB/E"/>
</dbReference>
<dbReference type="InterPro" id="IPR006075">
    <property type="entry name" value="Asn/Gln-tRNA_Trfase_suB/E_cat"/>
</dbReference>
<dbReference type="InterPro" id="IPR018027">
    <property type="entry name" value="Asn/Gln_amidotransferase"/>
</dbReference>
<dbReference type="InterPro" id="IPR003789">
    <property type="entry name" value="Asn/Gln_tRNA_amidoTrase-B-like"/>
</dbReference>
<dbReference type="InterPro" id="IPR004413">
    <property type="entry name" value="GatB"/>
</dbReference>
<dbReference type="InterPro" id="IPR042114">
    <property type="entry name" value="GatB_C_1"/>
</dbReference>
<dbReference type="InterPro" id="IPR023168">
    <property type="entry name" value="GatB_Yqey_C_2"/>
</dbReference>
<dbReference type="InterPro" id="IPR017958">
    <property type="entry name" value="Gln-tRNA_amidoTrfase_suB_CS"/>
</dbReference>
<dbReference type="InterPro" id="IPR014746">
    <property type="entry name" value="Gln_synth/guanido_kin_cat_dom"/>
</dbReference>
<dbReference type="NCBIfam" id="TIGR00133">
    <property type="entry name" value="gatB"/>
    <property type="match status" value="1"/>
</dbReference>
<dbReference type="NCBIfam" id="NF004011">
    <property type="entry name" value="PRK05477.1-1"/>
    <property type="match status" value="1"/>
</dbReference>
<dbReference type="NCBIfam" id="NF004012">
    <property type="entry name" value="PRK05477.1-2"/>
    <property type="match status" value="1"/>
</dbReference>
<dbReference type="NCBIfam" id="NF004014">
    <property type="entry name" value="PRK05477.1-4"/>
    <property type="match status" value="1"/>
</dbReference>
<dbReference type="PANTHER" id="PTHR11659">
    <property type="entry name" value="GLUTAMYL-TRNA GLN AMIDOTRANSFERASE SUBUNIT B MITOCHONDRIAL AND PROKARYOTIC PET112-RELATED"/>
    <property type="match status" value="1"/>
</dbReference>
<dbReference type="PANTHER" id="PTHR11659:SF0">
    <property type="entry name" value="GLUTAMYL-TRNA(GLN) AMIDOTRANSFERASE SUBUNIT B, MITOCHONDRIAL"/>
    <property type="match status" value="1"/>
</dbReference>
<dbReference type="Pfam" id="PF02934">
    <property type="entry name" value="GatB_N"/>
    <property type="match status" value="1"/>
</dbReference>
<dbReference type="Pfam" id="PF02637">
    <property type="entry name" value="GatB_Yqey"/>
    <property type="match status" value="1"/>
</dbReference>
<dbReference type="SMART" id="SM00845">
    <property type="entry name" value="GatB_Yqey"/>
    <property type="match status" value="1"/>
</dbReference>
<dbReference type="SUPFAM" id="SSF89095">
    <property type="entry name" value="GatB/YqeY motif"/>
    <property type="match status" value="1"/>
</dbReference>
<dbReference type="SUPFAM" id="SSF55931">
    <property type="entry name" value="Glutamine synthetase/guanido kinase"/>
    <property type="match status" value="1"/>
</dbReference>
<dbReference type="PROSITE" id="PS01234">
    <property type="entry name" value="GATB"/>
    <property type="match status" value="1"/>
</dbReference>
<accession>A8YTZ7</accession>
<organism>
    <name type="scientific">Lactobacillus helveticus (strain DPC 4571)</name>
    <dbReference type="NCBI Taxonomy" id="405566"/>
    <lineage>
        <taxon>Bacteria</taxon>
        <taxon>Bacillati</taxon>
        <taxon>Bacillota</taxon>
        <taxon>Bacilli</taxon>
        <taxon>Lactobacillales</taxon>
        <taxon>Lactobacillaceae</taxon>
        <taxon>Lactobacillus</taxon>
    </lineage>
</organism>